<reference key="1">
    <citation type="journal article" date="2005" name="Nature">
        <title>Sequencing of Aspergillus nidulans and comparative analysis with A. fumigatus and A. oryzae.</title>
        <authorList>
            <person name="Galagan J.E."/>
            <person name="Calvo S.E."/>
            <person name="Cuomo C."/>
            <person name="Ma L.-J."/>
            <person name="Wortman J.R."/>
            <person name="Batzoglou S."/>
            <person name="Lee S.-I."/>
            <person name="Bastuerkmen M."/>
            <person name="Spevak C.C."/>
            <person name="Clutterbuck J."/>
            <person name="Kapitonov V."/>
            <person name="Jurka J."/>
            <person name="Scazzocchio C."/>
            <person name="Farman M.L."/>
            <person name="Butler J."/>
            <person name="Purcell S."/>
            <person name="Harris S."/>
            <person name="Braus G.H."/>
            <person name="Draht O."/>
            <person name="Busch S."/>
            <person name="D'Enfert C."/>
            <person name="Bouchier C."/>
            <person name="Goldman G.H."/>
            <person name="Bell-Pedersen D."/>
            <person name="Griffiths-Jones S."/>
            <person name="Doonan J.H."/>
            <person name="Yu J."/>
            <person name="Vienken K."/>
            <person name="Pain A."/>
            <person name="Freitag M."/>
            <person name="Selker E.U."/>
            <person name="Archer D.B."/>
            <person name="Penalva M.A."/>
            <person name="Oakley B.R."/>
            <person name="Momany M."/>
            <person name="Tanaka T."/>
            <person name="Kumagai T."/>
            <person name="Asai K."/>
            <person name="Machida M."/>
            <person name="Nierman W.C."/>
            <person name="Denning D.W."/>
            <person name="Caddick M.X."/>
            <person name="Hynes M."/>
            <person name="Paoletti M."/>
            <person name="Fischer R."/>
            <person name="Miller B.L."/>
            <person name="Dyer P.S."/>
            <person name="Sachs M.S."/>
            <person name="Osmani S.A."/>
            <person name="Birren B.W."/>
        </authorList>
    </citation>
    <scope>NUCLEOTIDE SEQUENCE [LARGE SCALE GENOMIC DNA]</scope>
    <source>
        <strain>FGSC A4 / ATCC 38163 / CBS 112.46 / NRRL 194 / M139</strain>
    </source>
</reference>
<reference key="2">
    <citation type="journal article" date="2009" name="Fungal Genet. Biol.">
        <title>The 2008 update of the Aspergillus nidulans genome annotation: a community effort.</title>
        <authorList>
            <person name="Wortman J.R."/>
            <person name="Gilsenan J.M."/>
            <person name="Joardar V."/>
            <person name="Deegan J."/>
            <person name="Clutterbuck J."/>
            <person name="Andersen M.R."/>
            <person name="Archer D."/>
            <person name="Bencina M."/>
            <person name="Braus G."/>
            <person name="Coutinho P."/>
            <person name="von Dohren H."/>
            <person name="Doonan J."/>
            <person name="Driessen A.J."/>
            <person name="Durek P."/>
            <person name="Espeso E."/>
            <person name="Fekete E."/>
            <person name="Flipphi M."/>
            <person name="Estrada C.G."/>
            <person name="Geysens S."/>
            <person name="Goldman G."/>
            <person name="de Groot P.W."/>
            <person name="Hansen K."/>
            <person name="Harris S.D."/>
            <person name="Heinekamp T."/>
            <person name="Helmstaedt K."/>
            <person name="Henrissat B."/>
            <person name="Hofmann G."/>
            <person name="Homan T."/>
            <person name="Horio T."/>
            <person name="Horiuchi H."/>
            <person name="James S."/>
            <person name="Jones M."/>
            <person name="Karaffa L."/>
            <person name="Karanyi Z."/>
            <person name="Kato M."/>
            <person name="Keller N."/>
            <person name="Kelly D.E."/>
            <person name="Kiel J.A."/>
            <person name="Kim J.M."/>
            <person name="van der Klei I.J."/>
            <person name="Klis F.M."/>
            <person name="Kovalchuk A."/>
            <person name="Krasevec N."/>
            <person name="Kubicek C.P."/>
            <person name="Liu B."/>
            <person name="Maccabe A."/>
            <person name="Meyer V."/>
            <person name="Mirabito P."/>
            <person name="Miskei M."/>
            <person name="Mos M."/>
            <person name="Mullins J."/>
            <person name="Nelson D.R."/>
            <person name="Nielsen J."/>
            <person name="Oakley B.R."/>
            <person name="Osmani S.A."/>
            <person name="Pakula T."/>
            <person name="Paszewski A."/>
            <person name="Paulsen I."/>
            <person name="Pilsyk S."/>
            <person name="Pocsi I."/>
            <person name="Punt P.J."/>
            <person name="Ram A.F."/>
            <person name="Ren Q."/>
            <person name="Robellet X."/>
            <person name="Robson G."/>
            <person name="Seiboth B."/>
            <person name="van Solingen P."/>
            <person name="Specht T."/>
            <person name="Sun J."/>
            <person name="Taheri-Talesh N."/>
            <person name="Takeshita N."/>
            <person name="Ussery D."/>
            <person name="vanKuyk P.A."/>
            <person name="Visser H."/>
            <person name="van de Vondervoort P.J."/>
            <person name="de Vries R.P."/>
            <person name="Walton J."/>
            <person name="Xiang X."/>
            <person name="Xiong Y."/>
            <person name="Zeng A.P."/>
            <person name="Brandt B.W."/>
            <person name="Cornell M.J."/>
            <person name="van den Hondel C.A."/>
            <person name="Visser J."/>
            <person name="Oliver S.G."/>
            <person name="Turner G."/>
        </authorList>
    </citation>
    <scope>GENOME REANNOTATION</scope>
    <source>
        <strain>FGSC A4 / ATCC 38163 / CBS 112.46 / NRRL 194 / M139</strain>
    </source>
</reference>
<sequence>MRSRYAGATETFADSAYREKEQAFLDANDITKGRYFNEATLPALRSYAVPPVRETKVASLPVPATTPASPNVAPAPALPQAEARASEVASQGALDAETQRVTAPHPVEKHPSYSGPQPSDSRAAPQLAPGTTEISQKADGPAPEVRHAAQNLQQGQKATSSLPDTPRSSQDPSDATVRADQKDATKAIPSAQPAISTPKPQHDLPASPLPGRPVHVTDQPLSPVSSAGPYSNNTPAPTAASPATSTTEDVSAEKLPTPKRIAATQERSSFVPTTPDEQLRFEEAQSLQQNALLVSQVKDGAGTGPLTNQVISEDLPSTSTTANVAEGASEQVSKDLLPESKMPESTPAAIVESKSQPQSPLGQASSQAETVVKDVAPGTQLTKKTSSSPHPGPPPERMTTRVSSGAIRHKSVSEILGEAPKTPVSPIEKPHTVEKPTDSARAGVYDSTDSAKLRLKDRRAREKERNKFSTVVFPKQQQQPDKDGDMDLVRQQSGALIKLNEERDYLFTLFQNKAYAPPRGTALTALLSSAHKTLTTNNYLLDYQEQMDCRILRRIYDLQHANRWPLRQLKRSAEPPRQAAHWDVLLDHMKWMRTDFREERKWKLAAAKSCADWCAEYIHSDPESRSMLRVQARIPPKDSPCKNGPQSATMVSPPAELGNDAMEISHPTPDLVPSSEEDSVSEGFPDEPRHGLQDTVAPAAIFSLGSDEFTFSLDMTPTAQKLLDELPIYTPVQIAPDTNLPRFKDLPDASWKTEILPVSKYARGKIMFREDEPARKRSRYDYSQYSSGSEHPVVELPPEQTNVALFQPENRHIRDRIHPAQPFRPPTEYPMPSLGFLESRQSSQWTYAEDEELRSLVEEYSYNWSLISSCLTPSSQFTSGAERRTPWECFERWAGIEGLPSDMSKTAYFRAYHQRIDTAQRNVMAQQAAAQQQQQQQQQQGSNGNNQQPMPLIRRRGTQPIRVDRRRSSKHLALLDAMRKLAKKRETILQKQQHASQLASLRKVNEANQPKPPISSPAEFSRLKHERELKLQERQEQYRQQMIAQQRASLAARAGQMPNQQQMMNAPGRAPNAIPHNPNAPPVSTSTANGLPNGISNPLANGMPNGLPQNVGVNQGRPHVQGMHGSGGPVNNHISPNPMAMKMMPQASMQQNNAPRPNMAMQASPDNARVIREANRLQEQQRILQSRQQPSQHPLQQQQPPQAQNQQQQLPQQPQQAQQQFHAQPQFVPQGSNSPNLNMPTVNGTPNNPAMIAALQAGGGMQSPPFHNSAPQGVSTPSPRMGQPNTLSSGAVPTTISTIQSQIQRSNPNMPLEQVKQLTTERLHQYQQQQQQRMSQVAMNAAAGNLGVQPNYQVSHDGNFQPQSGMSGGPNMQVPQAQGFSPMMRVPQPSQQNRIGAGGSPAMGVAVPQQSRSATPQTQRSGSIQTGTIAGASKSPNTHSQTQSMGA</sequence>
<accession>Q5B4Q8</accession>
<accession>C8V8G3</accession>
<organism>
    <name type="scientific">Emericella nidulans (strain FGSC A4 / ATCC 38163 / CBS 112.46 / NRRL 194 / M139)</name>
    <name type="common">Aspergillus nidulans</name>
    <dbReference type="NCBI Taxonomy" id="227321"/>
    <lineage>
        <taxon>Eukaryota</taxon>
        <taxon>Fungi</taxon>
        <taxon>Dikarya</taxon>
        <taxon>Ascomycota</taxon>
        <taxon>Pezizomycotina</taxon>
        <taxon>Eurotiomycetes</taxon>
        <taxon>Eurotiomycetidae</taxon>
        <taxon>Eurotiales</taxon>
        <taxon>Aspergillaceae</taxon>
        <taxon>Aspergillus</taxon>
        <taxon>Aspergillus subgen. Nidulantes</taxon>
    </lineage>
</organism>
<name>EAF1_EMENI</name>
<evidence type="ECO:0000250" key="1"/>
<evidence type="ECO:0000255" key="2">
    <source>
        <dbReference type="PROSITE-ProRule" id="PRU00133"/>
    </source>
</evidence>
<evidence type="ECO:0000255" key="3">
    <source>
        <dbReference type="PROSITE-ProRule" id="PRU00549"/>
    </source>
</evidence>
<evidence type="ECO:0000256" key="4">
    <source>
        <dbReference type="SAM" id="MobiDB-lite"/>
    </source>
</evidence>
<evidence type="ECO:0000305" key="5"/>
<keyword id="KW-0010">Activator</keyword>
<keyword id="KW-0156">Chromatin regulator</keyword>
<keyword id="KW-0227">DNA damage</keyword>
<keyword id="KW-0234">DNA repair</keyword>
<keyword id="KW-0539">Nucleus</keyword>
<keyword id="KW-1185">Reference proteome</keyword>
<keyword id="KW-0804">Transcription</keyword>
<keyword id="KW-0805">Transcription regulation</keyword>
<dbReference type="EMBL" id="AACD01000078">
    <property type="protein sequence ID" value="EAA60815.1"/>
    <property type="molecule type" value="Genomic_DNA"/>
</dbReference>
<dbReference type="EMBL" id="BN001303">
    <property type="protein sequence ID" value="CBF77440.1"/>
    <property type="molecule type" value="Genomic_DNA"/>
</dbReference>
<dbReference type="RefSeq" id="XP_662076.1">
    <property type="nucleotide sequence ID" value="XM_656984.1"/>
</dbReference>
<dbReference type="SMR" id="Q5B4Q8"/>
<dbReference type="STRING" id="227321.Q5B4Q8"/>
<dbReference type="EnsemblFungi" id="CBF77440">
    <property type="protein sequence ID" value="CBF77440"/>
    <property type="gene ID" value="ANIA_04472"/>
</dbReference>
<dbReference type="KEGG" id="ani:ANIA_04472"/>
<dbReference type="eggNOG" id="ENOG502RGMX">
    <property type="taxonomic scope" value="Eukaryota"/>
</dbReference>
<dbReference type="HOGENOM" id="CLU_001331_1_0_1"/>
<dbReference type="InParanoid" id="Q5B4Q8"/>
<dbReference type="OMA" id="KQQHASH"/>
<dbReference type="OrthoDB" id="5364245at2759"/>
<dbReference type="Proteomes" id="UP000000560">
    <property type="component" value="Chromosome III"/>
</dbReference>
<dbReference type="GO" id="GO:0035267">
    <property type="term" value="C:NuA4 histone acetyltransferase complex"/>
    <property type="evidence" value="ECO:0000318"/>
    <property type="project" value="GO_Central"/>
</dbReference>
<dbReference type="GO" id="GO:0005634">
    <property type="term" value="C:nucleus"/>
    <property type="evidence" value="ECO:0007669"/>
    <property type="project" value="UniProtKB-SubCell"/>
</dbReference>
<dbReference type="GO" id="GO:0003682">
    <property type="term" value="F:chromatin binding"/>
    <property type="evidence" value="ECO:0000318"/>
    <property type="project" value="GO_Central"/>
</dbReference>
<dbReference type="GO" id="GO:0006325">
    <property type="term" value="P:chromatin organization"/>
    <property type="evidence" value="ECO:0007669"/>
    <property type="project" value="UniProtKB-KW"/>
</dbReference>
<dbReference type="GO" id="GO:0006281">
    <property type="term" value="P:DNA repair"/>
    <property type="evidence" value="ECO:0000318"/>
    <property type="project" value="GO_Central"/>
</dbReference>
<dbReference type="CDD" id="cd00167">
    <property type="entry name" value="SANT"/>
    <property type="match status" value="1"/>
</dbReference>
<dbReference type="Gene3D" id="1.10.10.60">
    <property type="entry name" value="Homeodomain-like"/>
    <property type="match status" value="1"/>
</dbReference>
<dbReference type="InterPro" id="IPR009057">
    <property type="entry name" value="Homeodomain-like_sf"/>
</dbReference>
<dbReference type="InterPro" id="IPR014012">
    <property type="entry name" value="HSA_dom"/>
</dbReference>
<dbReference type="InterPro" id="IPR001005">
    <property type="entry name" value="SANT/Myb"/>
</dbReference>
<dbReference type="PANTHER" id="PTHR46459:SF1">
    <property type="entry name" value="E1A-BINDING PROTEIN P400"/>
    <property type="match status" value="1"/>
</dbReference>
<dbReference type="PANTHER" id="PTHR46459">
    <property type="entry name" value="E1A-BINDING PROTEIN P400-RELATED"/>
    <property type="match status" value="1"/>
</dbReference>
<dbReference type="Pfam" id="PF07529">
    <property type="entry name" value="HSA"/>
    <property type="match status" value="1"/>
</dbReference>
<dbReference type="Pfam" id="PF13921">
    <property type="entry name" value="Myb_DNA-bind_6"/>
    <property type="match status" value="1"/>
</dbReference>
<dbReference type="SMART" id="SM00573">
    <property type="entry name" value="HSA"/>
    <property type="match status" value="1"/>
</dbReference>
<dbReference type="SMART" id="SM00717">
    <property type="entry name" value="SANT"/>
    <property type="match status" value="1"/>
</dbReference>
<dbReference type="SUPFAM" id="SSF46689">
    <property type="entry name" value="Homeodomain-like"/>
    <property type="match status" value="1"/>
</dbReference>
<dbReference type="PROSITE" id="PS51204">
    <property type="entry name" value="HSA"/>
    <property type="match status" value="1"/>
</dbReference>
<dbReference type="PROSITE" id="PS50090">
    <property type="entry name" value="MYB_LIKE"/>
    <property type="match status" value="1"/>
</dbReference>
<feature type="chain" id="PRO_0000065818" description="Chromatin modification-related protein eaf1">
    <location>
        <begin position="1"/>
        <end position="1447"/>
    </location>
</feature>
<feature type="domain" description="HSA" evidence="3">
    <location>
        <begin position="569"/>
        <end position="644"/>
    </location>
</feature>
<feature type="domain" description="Myb-like" evidence="2">
    <location>
        <begin position="841"/>
        <end position="899"/>
    </location>
</feature>
<feature type="region of interest" description="Disordered" evidence="4">
    <location>
        <begin position="60"/>
        <end position="271"/>
    </location>
</feature>
<feature type="region of interest" description="Disordered" evidence="4">
    <location>
        <begin position="300"/>
        <end position="443"/>
    </location>
</feature>
<feature type="region of interest" description="Disordered" evidence="4">
    <location>
        <begin position="636"/>
        <end position="689"/>
    </location>
</feature>
<feature type="region of interest" description="Disordered" evidence="4">
    <location>
        <begin position="923"/>
        <end position="970"/>
    </location>
</feature>
<feature type="region of interest" description="Disordered" evidence="4">
    <location>
        <begin position="1003"/>
        <end position="1023"/>
    </location>
</feature>
<feature type="region of interest" description="Disordered" evidence="4">
    <location>
        <begin position="1180"/>
        <end position="1248"/>
    </location>
</feature>
<feature type="region of interest" description="Disordered" evidence="4">
    <location>
        <begin position="1381"/>
        <end position="1447"/>
    </location>
</feature>
<feature type="compositionally biased region" description="Polar residues" evidence="4">
    <location>
        <begin position="150"/>
        <end position="173"/>
    </location>
</feature>
<feature type="compositionally biased region" description="Polar residues" evidence="4">
    <location>
        <begin position="219"/>
        <end position="230"/>
    </location>
</feature>
<feature type="compositionally biased region" description="Low complexity" evidence="4">
    <location>
        <begin position="231"/>
        <end position="247"/>
    </location>
</feature>
<feature type="compositionally biased region" description="Polar residues" evidence="4">
    <location>
        <begin position="305"/>
        <end position="323"/>
    </location>
</feature>
<feature type="compositionally biased region" description="Basic and acidic residues" evidence="4">
    <location>
        <begin position="332"/>
        <end position="342"/>
    </location>
</feature>
<feature type="compositionally biased region" description="Polar residues" evidence="4">
    <location>
        <begin position="353"/>
        <end position="369"/>
    </location>
</feature>
<feature type="compositionally biased region" description="Polar residues" evidence="4">
    <location>
        <begin position="379"/>
        <end position="389"/>
    </location>
</feature>
<feature type="compositionally biased region" description="Basic and acidic residues" evidence="4">
    <location>
        <begin position="428"/>
        <end position="438"/>
    </location>
</feature>
<feature type="compositionally biased region" description="Low complexity" evidence="4">
    <location>
        <begin position="925"/>
        <end position="940"/>
    </location>
</feature>
<feature type="compositionally biased region" description="Low complexity" evidence="4">
    <location>
        <begin position="1180"/>
        <end position="1230"/>
    </location>
</feature>
<feature type="compositionally biased region" description="Polar residues" evidence="4">
    <location>
        <begin position="1231"/>
        <end position="1248"/>
    </location>
</feature>
<feature type="compositionally biased region" description="Polar residues" evidence="4">
    <location>
        <begin position="1408"/>
        <end position="1447"/>
    </location>
</feature>
<protein>
    <recommendedName>
        <fullName>Chromatin modification-related protein eaf1</fullName>
    </recommendedName>
    <alternativeName>
        <fullName>Esa1-associated factor 1</fullName>
    </alternativeName>
    <alternativeName>
        <fullName>Vacuolar import and degradation protein 21</fullName>
    </alternativeName>
</protein>
<gene>
    <name type="primary">eaf1</name>
    <name type="synonym">vid21</name>
    <name type="ORF">AN4472</name>
</gene>
<comment type="function">
    <text evidence="1">Component of the NuA4 histone acetyltransferase complex which is involved in transcriptional activation of selected genes principally by acetylation of nucleosomal histone H4 and H2A. The NuA4 complex is also involved in DNA repair (By similarity).</text>
</comment>
<comment type="subunit">
    <text evidence="1">Component of the NuA4 histone acetyltransferase complex.</text>
</comment>
<comment type="subcellular location">
    <subcellularLocation>
        <location evidence="5">Nucleus</location>
    </subcellularLocation>
</comment>
<comment type="similarity">
    <text evidence="5">Belongs to the EAF1 family.</text>
</comment>
<proteinExistence type="inferred from homology"/>